<accession>P80096</accession>
<feature type="chain" id="PRO_0000204293" description="Hemocyanin C chain">
    <location>
        <begin position="1"/>
        <end position="661"/>
    </location>
</feature>
<feature type="binding site" evidence="1">
    <location>
        <position position="200"/>
    </location>
    <ligand>
        <name>Cu cation</name>
        <dbReference type="ChEBI" id="CHEBI:23378"/>
        <label>A</label>
    </ligand>
</feature>
<feature type="binding site" evidence="1">
    <location>
        <position position="204"/>
    </location>
    <ligand>
        <name>Cu cation</name>
        <dbReference type="ChEBI" id="CHEBI:23378"/>
        <label>A</label>
    </ligand>
</feature>
<feature type="binding site" evidence="1">
    <location>
        <position position="230"/>
    </location>
    <ligand>
        <name>Cu cation</name>
        <dbReference type="ChEBI" id="CHEBI:23378"/>
        <label>A</label>
    </ligand>
</feature>
<feature type="binding site" evidence="1">
    <location>
        <position position="350"/>
    </location>
    <ligand>
        <name>Cu cation</name>
        <dbReference type="ChEBI" id="CHEBI:23378"/>
        <label>B</label>
    </ligand>
</feature>
<feature type="binding site" evidence="1">
    <location>
        <position position="354"/>
    </location>
    <ligand>
        <name>Cu cation</name>
        <dbReference type="ChEBI" id="CHEBI:23378"/>
        <label>B</label>
    </ligand>
</feature>
<feature type="binding site" evidence="1">
    <location>
        <position position="390"/>
    </location>
    <ligand>
        <name>Cu cation</name>
        <dbReference type="ChEBI" id="CHEBI:23378"/>
        <label>B</label>
    </ligand>
</feature>
<feature type="glycosylation site" description="N-linked (GlcNAc...) asparagine" evidence="2">
    <location>
        <position position="476"/>
    </location>
</feature>
<feature type="disulfide bond" evidence="4">
    <location>
        <begin position="3"/>
        <end position="557"/>
    </location>
</feature>
<evidence type="ECO:0000250" key="1">
    <source>
        <dbReference type="UniProtKB" id="P04254"/>
    </source>
</evidence>
<evidence type="ECO:0000255" key="2">
    <source>
        <dbReference type="PROSITE-ProRule" id="PRU00498"/>
    </source>
</evidence>
<evidence type="ECO:0000269" key="3">
    <source>
    </source>
</evidence>
<evidence type="ECO:0000269" key="4">
    <source ref="2"/>
</evidence>
<evidence type="ECO:0000303" key="5">
    <source>
    </source>
</evidence>
<evidence type="ECO:0000305" key="6"/>
<proteinExistence type="evidence at protein level"/>
<organism>
    <name type="scientific">Panulirus interruptus</name>
    <name type="common">California spiny lobster</name>
    <name type="synonym">Palinurus interruptus</name>
    <dbReference type="NCBI Taxonomy" id="6735"/>
    <lineage>
        <taxon>Eukaryota</taxon>
        <taxon>Metazoa</taxon>
        <taxon>Ecdysozoa</taxon>
        <taxon>Arthropoda</taxon>
        <taxon>Crustacea</taxon>
        <taxon>Multicrustacea</taxon>
        <taxon>Malacostraca</taxon>
        <taxon>Eumalacostraca</taxon>
        <taxon>Eucarida</taxon>
        <taxon>Decapoda</taxon>
        <taxon>Pleocyemata</taxon>
        <taxon>Achelata</taxon>
        <taxon>Palinuroidea</taxon>
        <taxon>Palinuridae</taxon>
        <taxon>Panulirus</taxon>
    </lineage>
</organism>
<protein>
    <recommendedName>
        <fullName evidence="5">Hemocyanin C chain</fullName>
    </recommendedName>
</protein>
<dbReference type="PIR" id="S21221">
    <property type="entry name" value="S21221"/>
</dbReference>
<dbReference type="SMR" id="P80096"/>
<dbReference type="GO" id="GO:0005576">
    <property type="term" value="C:extracellular region"/>
    <property type="evidence" value="ECO:0007669"/>
    <property type="project" value="UniProtKB-SubCell"/>
</dbReference>
<dbReference type="GO" id="GO:0046872">
    <property type="term" value="F:metal ion binding"/>
    <property type="evidence" value="ECO:0007669"/>
    <property type="project" value="UniProtKB-KW"/>
</dbReference>
<dbReference type="GO" id="GO:0016491">
    <property type="term" value="F:oxidoreductase activity"/>
    <property type="evidence" value="ECO:0007669"/>
    <property type="project" value="InterPro"/>
</dbReference>
<dbReference type="GO" id="GO:0005344">
    <property type="term" value="F:oxygen carrier activity"/>
    <property type="evidence" value="ECO:0007669"/>
    <property type="project" value="UniProtKB-KW"/>
</dbReference>
<dbReference type="Gene3D" id="1.10.1280.10">
    <property type="entry name" value="Di-copper center containing domain from catechol oxidase"/>
    <property type="match status" value="1"/>
</dbReference>
<dbReference type="Gene3D" id="2.60.40.1520">
    <property type="entry name" value="Hemocyanin, C-terminal domain"/>
    <property type="match status" value="1"/>
</dbReference>
<dbReference type="Gene3D" id="1.20.1370.10">
    <property type="entry name" value="Hemocyanin, N-terminal domain"/>
    <property type="match status" value="1"/>
</dbReference>
<dbReference type="InterPro" id="IPR008922">
    <property type="entry name" value="Di-copper_centre_dom_sf"/>
</dbReference>
<dbReference type="InterPro" id="IPR013788">
    <property type="entry name" value="Hemocyanin/hexamerin"/>
</dbReference>
<dbReference type="InterPro" id="IPR000896">
    <property type="entry name" value="Hemocyanin/hexamerin_mid_dom"/>
</dbReference>
<dbReference type="InterPro" id="IPR005203">
    <property type="entry name" value="Hemocyanin_C"/>
</dbReference>
<dbReference type="InterPro" id="IPR037020">
    <property type="entry name" value="Hemocyanin_C_sf"/>
</dbReference>
<dbReference type="InterPro" id="IPR005204">
    <property type="entry name" value="Hemocyanin_N"/>
</dbReference>
<dbReference type="InterPro" id="IPR036697">
    <property type="entry name" value="Hemocyanin_N_sf"/>
</dbReference>
<dbReference type="InterPro" id="IPR014756">
    <property type="entry name" value="Ig_E-set"/>
</dbReference>
<dbReference type="InterPro" id="IPR002227">
    <property type="entry name" value="Tyrosinase_Cu-bd"/>
</dbReference>
<dbReference type="PANTHER" id="PTHR11511:SF5">
    <property type="entry name" value="FAT-BODY PROTEIN 1-RELATED"/>
    <property type="match status" value="1"/>
</dbReference>
<dbReference type="PANTHER" id="PTHR11511">
    <property type="entry name" value="LARVAL STORAGE PROTEIN/PHENOLOXIDASE"/>
    <property type="match status" value="1"/>
</dbReference>
<dbReference type="Pfam" id="PF03723">
    <property type="entry name" value="Hemocyanin_C"/>
    <property type="match status" value="1"/>
</dbReference>
<dbReference type="Pfam" id="PF00372">
    <property type="entry name" value="Hemocyanin_M"/>
    <property type="match status" value="1"/>
</dbReference>
<dbReference type="Pfam" id="PF03722">
    <property type="entry name" value="Hemocyanin_N"/>
    <property type="match status" value="1"/>
</dbReference>
<dbReference type="PRINTS" id="PR00187">
    <property type="entry name" value="HAEMOCYANIN"/>
</dbReference>
<dbReference type="SUPFAM" id="SSF48056">
    <property type="entry name" value="Di-copper centre-containing domain"/>
    <property type="match status" value="1"/>
</dbReference>
<dbReference type="SUPFAM" id="SSF81296">
    <property type="entry name" value="E set domains"/>
    <property type="match status" value="1"/>
</dbReference>
<dbReference type="SUPFAM" id="SSF48050">
    <property type="entry name" value="Hemocyanin, N-terminal domain"/>
    <property type="match status" value="1"/>
</dbReference>
<dbReference type="PROSITE" id="PS00209">
    <property type="entry name" value="HEMOCYANIN_1"/>
    <property type="match status" value="1"/>
</dbReference>
<dbReference type="PROSITE" id="PS00210">
    <property type="entry name" value="HEMOCYANIN_2"/>
    <property type="match status" value="1"/>
</dbReference>
<dbReference type="PROSITE" id="PS00498">
    <property type="entry name" value="TYROSINASE_2"/>
    <property type="match status" value="1"/>
</dbReference>
<keyword id="KW-0186">Copper</keyword>
<keyword id="KW-0903">Direct protein sequencing</keyword>
<keyword id="KW-1015">Disulfide bond</keyword>
<keyword id="KW-0325">Glycoprotein</keyword>
<keyword id="KW-0479">Metal-binding</keyword>
<keyword id="KW-0561">Oxygen transport</keyword>
<keyword id="KW-0964">Secreted</keyword>
<keyword id="KW-0813">Transport</keyword>
<name>HCYC_PANIN</name>
<reference key="1">
    <citation type="journal article" date="1992" name="Eur. J. Biochem.">
        <title>Primary structure of hemocyanin subunit c from Panulirus interruptus.</title>
        <authorList>
            <person name="Neuteboom B."/>
            <person name="Jekel P.A."/>
            <person name="Beintema J.J."/>
        </authorList>
    </citation>
    <scope>PROTEIN SEQUENCE</scope>
    <scope>SUBCELLULAR LOCATION</scope>
    <scope>TISSUE SPECIFICITY</scope>
    <source>
        <tissue>Hemolymph</tissue>
    </source>
</reference>
<reference key="2">
    <citation type="journal article" date="1989" name="Biochim. Biophys. Acta">
        <title>Sulfhydryl groups and disulfide bridges in subunit c of Panulirus interruptus hemocyanin.</title>
        <authorList>
            <person name="Neuteboom B."/>
            <person name="Jekel P.A."/>
            <person name="Hofstra R.M.W."/>
            <person name="Beintema J.J."/>
        </authorList>
    </citation>
    <scope>PARTIAL PROTEIN SEQUENCE</scope>
    <scope>SUBCELLULAR LOCATION</scope>
    <scope>TISSUE SPECIFICITY</scope>
    <scope>DISULFIDE BOND</scope>
    <source>
        <tissue>Hemolymph</tissue>
    </source>
</reference>
<sequence length="661" mass="75874">ADCQAGDSADKLLAQKQHDVNYLVYKLYGDIRDDHLKELGETFNPQGDLLLYHDNGASVNTLMADFKDGRLLQKKHWFSLFNTRQREEALMMHRVLMNCKNWHAFVSNAAYFRTNMNEGEYLYALYVSLIHSGLGEGVVLPPLYEVTPHMFTNSEVIHEAYKAQMTNTPSKFESHFTGSKKNPEQHVAYFGEDVGMNTHHVLWHMEFPFWWEDSSGRHLDRKGESFFWVHHQLTVRYDAERLSNHLDPVEELSWNKAIDEGFAPHTAYKYGGYFPSRPDNVHFSDVDGVARVRDMSMTEDRIRDAIAHGYIDALDGSHIDIMNSHGIEFLGDIIESSGYSANPGFYGSLHNTAHIMLGRQGDPTGKFDLPPGVLEHFETSTRDPSFFRLHKYMDNIFREHKDSLTPYTRDELEFNGVSIDSIAIEGTLETFFENFEYSLLNAVDDTVDIADVEILTYIERLNHKKFSFLILVTNNNNTEVLATVRIFAWPLRDNNGIEYSFNEGRWRALELDRFWVKVKHGHHQITRQSTESSVTVPDVPSLQTLIDRADAAISSGCALHLEDYESALGLPNRFLLPKGQAQGMEFNLVVAVTDGRTDAALDDLHENTKFIHYGYDRQYPDKRPHGYPLDRRVDDERIFEALPNFKQRTVKLYSHEGVDGG</sequence>
<comment type="function">
    <text evidence="1">Hemocyanins are copper-containing oxygen carriers occurring freely dissolved in the hemolymph of many mollusks and arthropods.</text>
</comment>
<comment type="subunit">
    <text evidence="1">Hexamer of a number of different chains, of which A, B, and C have been identified.</text>
</comment>
<comment type="subcellular location">
    <subcellularLocation>
        <location evidence="3 4">Secreted</location>
        <location evidence="3 4">Extracellular space</location>
    </subcellularLocation>
</comment>
<comment type="tissue specificity">
    <text evidence="3 4">Hemolymph.</text>
</comment>
<comment type="similarity">
    <text evidence="6">Belongs to the tyrosinase family. Hemocyanin subfamily.</text>
</comment>